<accession>A6WLQ7</accession>
<sequence>MIIKPKIRGFICTTTHPVGCEANVQEQITLTKAKGKIANGPKRVLVVGSSSGYGLSSRIAAAFGSDAATIGVFFEKPGTETKPGTAGWYNSAAFDKFAKAEGLYSKSINCDAFSHEAKQKVIELIKQDLGEIDMVVYSLASPVRKLPDSGELIRSALKPIGETYTATAVDTNKDCIIEATVEPATEQEIADTVTVMGGEDWELWIKALSEAGVLADNCKTVAYSYIGTELTWPIYWHGALGKAKMDLDRAAKALNEQLSATGGSANVAVLKSVVTQASSAIPVMPLYIAMVFKKMRQEGLHEGCMEQIYRMFSERLFRADGAKPETDSDNRIRLDDWELREDIQQHCRNLWPQVTTENLSELTDYREYKAEFIKLFGFGIEGIDYDADVNPYVEFDVIEL</sequence>
<name>FABV_SHEB8</name>
<organism>
    <name type="scientific">Shewanella baltica (strain OS185)</name>
    <dbReference type="NCBI Taxonomy" id="402882"/>
    <lineage>
        <taxon>Bacteria</taxon>
        <taxon>Pseudomonadati</taxon>
        <taxon>Pseudomonadota</taxon>
        <taxon>Gammaproteobacteria</taxon>
        <taxon>Alteromonadales</taxon>
        <taxon>Shewanellaceae</taxon>
        <taxon>Shewanella</taxon>
    </lineage>
</organism>
<keyword id="KW-0275">Fatty acid biosynthesis</keyword>
<keyword id="KW-0276">Fatty acid metabolism</keyword>
<keyword id="KW-0444">Lipid biosynthesis</keyword>
<keyword id="KW-0443">Lipid metabolism</keyword>
<keyword id="KW-0520">NAD</keyword>
<keyword id="KW-0560">Oxidoreductase</keyword>
<feature type="chain" id="PRO_1000070497" description="Enoyl-[acyl-carrier-protein] reductase [NADH]">
    <location>
        <begin position="1"/>
        <end position="400"/>
    </location>
</feature>
<feature type="active site" description="Proton donor" evidence="1">
    <location>
        <position position="235"/>
    </location>
</feature>
<feature type="binding site" evidence="1">
    <location>
        <begin position="48"/>
        <end position="53"/>
    </location>
    <ligand>
        <name>NAD(+)</name>
        <dbReference type="ChEBI" id="CHEBI:57540"/>
    </ligand>
</feature>
<feature type="binding site" evidence="1">
    <location>
        <begin position="74"/>
        <end position="75"/>
    </location>
    <ligand>
        <name>NAD(+)</name>
        <dbReference type="ChEBI" id="CHEBI:57540"/>
    </ligand>
</feature>
<feature type="binding site" evidence="1">
    <location>
        <begin position="111"/>
        <end position="112"/>
    </location>
    <ligand>
        <name>NAD(+)</name>
        <dbReference type="ChEBI" id="CHEBI:57540"/>
    </ligand>
</feature>
<feature type="binding site" evidence="1">
    <location>
        <begin position="139"/>
        <end position="140"/>
    </location>
    <ligand>
        <name>NAD(+)</name>
        <dbReference type="ChEBI" id="CHEBI:57540"/>
    </ligand>
</feature>
<feature type="binding site" evidence="1">
    <location>
        <position position="225"/>
    </location>
    <ligand>
        <name>substrate</name>
    </ligand>
</feature>
<feature type="binding site" evidence="1">
    <location>
        <position position="244"/>
    </location>
    <ligand>
        <name>NAD(+)</name>
        <dbReference type="ChEBI" id="CHEBI:57540"/>
    </ligand>
</feature>
<feature type="binding site" evidence="1">
    <location>
        <begin position="273"/>
        <end position="275"/>
    </location>
    <ligand>
        <name>NAD(+)</name>
        <dbReference type="ChEBI" id="CHEBI:57540"/>
    </ligand>
</feature>
<feature type="site" description="Plays an important role in discriminating NADH against NADPH" evidence="1">
    <location>
        <position position="75"/>
    </location>
</feature>
<comment type="function">
    <text evidence="1">Involved in the final reduction of the elongation cycle of fatty acid synthesis (FAS II). Catalyzes the reduction of a carbon-carbon double bond in an enoyl moiety that is covalently linked to an acyl carrier protein (ACP).</text>
</comment>
<comment type="catalytic activity">
    <reaction evidence="1">
        <text>a 2,3-saturated acyl-[ACP] + NAD(+) = a (2E)-enoyl-[ACP] + NADH + H(+)</text>
        <dbReference type="Rhea" id="RHEA:10240"/>
        <dbReference type="Rhea" id="RHEA-COMP:9925"/>
        <dbReference type="Rhea" id="RHEA-COMP:9926"/>
        <dbReference type="ChEBI" id="CHEBI:15378"/>
        <dbReference type="ChEBI" id="CHEBI:57540"/>
        <dbReference type="ChEBI" id="CHEBI:57945"/>
        <dbReference type="ChEBI" id="CHEBI:78784"/>
        <dbReference type="ChEBI" id="CHEBI:78785"/>
        <dbReference type="EC" id="1.3.1.9"/>
    </reaction>
</comment>
<comment type="pathway">
    <text evidence="1">Lipid metabolism; fatty acid biosynthesis.</text>
</comment>
<comment type="subunit">
    <text evidence="1">Monomer.</text>
</comment>
<comment type="similarity">
    <text evidence="1">Belongs to the TER reductase family.</text>
</comment>
<protein>
    <recommendedName>
        <fullName evidence="1">Enoyl-[acyl-carrier-protein] reductase [NADH]</fullName>
        <shortName evidence="1">ENR</shortName>
        <ecNumber evidence="1">1.3.1.9</ecNumber>
    </recommendedName>
</protein>
<evidence type="ECO:0000255" key="1">
    <source>
        <dbReference type="HAMAP-Rule" id="MF_01838"/>
    </source>
</evidence>
<reference key="1">
    <citation type="submission" date="2007-07" db="EMBL/GenBank/DDBJ databases">
        <title>Complete sequence of chromosome of Shewanella baltica OS185.</title>
        <authorList>
            <consortium name="US DOE Joint Genome Institute"/>
            <person name="Copeland A."/>
            <person name="Lucas S."/>
            <person name="Lapidus A."/>
            <person name="Barry K."/>
            <person name="Glavina del Rio T."/>
            <person name="Dalin E."/>
            <person name="Tice H."/>
            <person name="Pitluck S."/>
            <person name="Sims D."/>
            <person name="Brettin T."/>
            <person name="Bruce D."/>
            <person name="Detter J.C."/>
            <person name="Han C."/>
            <person name="Schmutz J."/>
            <person name="Larimer F."/>
            <person name="Land M."/>
            <person name="Hauser L."/>
            <person name="Kyrpides N."/>
            <person name="Mikhailova N."/>
            <person name="Brettar I."/>
            <person name="Rodrigues J."/>
            <person name="Konstantinidis K."/>
            <person name="Tiedje J."/>
            <person name="Richardson P."/>
        </authorList>
    </citation>
    <scope>NUCLEOTIDE SEQUENCE [LARGE SCALE GENOMIC DNA]</scope>
    <source>
        <strain>OS185</strain>
    </source>
</reference>
<proteinExistence type="inferred from homology"/>
<dbReference type="EC" id="1.3.1.9" evidence="1"/>
<dbReference type="EMBL" id="CP000753">
    <property type="protein sequence ID" value="ABS07746.1"/>
    <property type="molecule type" value="Genomic_DNA"/>
</dbReference>
<dbReference type="RefSeq" id="WP_006085369.1">
    <property type="nucleotide sequence ID" value="NC_009665.1"/>
</dbReference>
<dbReference type="SMR" id="A6WLQ7"/>
<dbReference type="GeneID" id="11771867"/>
<dbReference type="KEGG" id="sbm:Shew185_1599"/>
<dbReference type="HOGENOM" id="CLU_057698_1_0_6"/>
<dbReference type="UniPathway" id="UPA00094"/>
<dbReference type="GO" id="GO:0004318">
    <property type="term" value="F:enoyl-[acyl-carrier-protein] reductase (NADH) activity"/>
    <property type="evidence" value="ECO:0007669"/>
    <property type="project" value="UniProtKB-UniRule"/>
</dbReference>
<dbReference type="GO" id="GO:0051287">
    <property type="term" value="F:NAD binding"/>
    <property type="evidence" value="ECO:0007669"/>
    <property type="project" value="UniProtKB-UniRule"/>
</dbReference>
<dbReference type="GO" id="GO:0050343">
    <property type="term" value="F:trans-2-enoyl-CoA reductase (NADH) activity"/>
    <property type="evidence" value="ECO:0007669"/>
    <property type="project" value="TreeGrafter"/>
</dbReference>
<dbReference type="GO" id="GO:0006633">
    <property type="term" value="P:fatty acid biosynthetic process"/>
    <property type="evidence" value="ECO:0007669"/>
    <property type="project" value="UniProtKB-UniRule"/>
</dbReference>
<dbReference type="FunFam" id="3.40.50.720:FF:000221">
    <property type="entry name" value="Enoyl-[acyl-carrier-protein] reductase [NADH]"/>
    <property type="match status" value="1"/>
</dbReference>
<dbReference type="Gene3D" id="3.40.50.720">
    <property type="entry name" value="NAD(P)-binding Rossmann-like Domain"/>
    <property type="match status" value="1"/>
</dbReference>
<dbReference type="HAMAP" id="MF_01838">
    <property type="entry name" value="FabV_reductase"/>
    <property type="match status" value="1"/>
</dbReference>
<dbReference type="InterPro" id="IPR024906">
    <property type="entry name" value="Eno_Rdtase_FAD-bd_dom"/>
</dbReference>
<dbReference type="InterPro" id="IPR024910">
    <property type="entry name" value="Enoyl-CoA_Rdtase_cat_dom"/>
</dbReference>
<dbReference type="InterPro" id="IPR050048">
    <property type="entry name" value="FabV-like_NADH_b"/>
</dbReference>
<dbReference type="InterPro" id="IPR010758">
    <property type="entry name" value="Trans-2-enoyl-CoA_reductase"/>
</dbReference>
<dbReference type="NCBIfam" id="NF043048">
    <property type="entry name" value="EnoyACPredFabV"/>
    <property type="match status" value="1"/>
</dbReference>
<dbReference type="NCBIfam" id="NF010177">
    <property type="entry name" value="PRK13656.1"/>
    <property type="match status" value="1"/>
</dbReference>
<dbReference type="PANTHER" id="PTHR37480">
    <property type="entry name" value="ENOYL-[ACYL-CARRIER-PROTEIN] REDUCTASE [NADH]"/>
    <property type="match status" value="1"/>
</dbReference>
<dbReference type="PANTHER" id="PTHR37480:SF1">
    <property type="entry name" value="ENOYL-[ACYL-CARRIER-PROTEIN] REDUCTASE [NADH]"/>
    <property type="match status" value="1"/>
</dbReference>
<dbReference type="Pfam" id="PF07055">
    <property type="entry name" value="Eno-Rase_FAD_bd"/>
    <property type="match status" value="1"/>
</dbReference>
<dbReference type="Pfam" id="PF12242">
    <property type="entry name" value="Eno-Rase_NADH_b"/>
    <property type="match status" value="1"/>
</dbReference>
<dbReference type="Pfam" id="PF12241">
    <property type="entry name" value="Enoyl_reductase"/>
    <property type="match status" value="1"/>
</dbReference>
<gene>
    <name evidence="1" type="primary">fabV</name>
    <name type="ordered locus">Shew185_1599</name>
</gene>